<dbReference type="EC" id="2.7.8.13" evidence="1"/>
<dbReference type="EMBL" id="CP001635">
    <property type="protein sequence ID" value="ACS17567.1"/>
    <property type="molecule type" value="Genomic_DNA"/>
</dbReference>
<dbReference type="SMR" id="C5CNF1"/>
<dbReference type="STRING" id="543728.Vapar_0916"/>
<dbReference type="KEGG" id="vap:Vapar_0916"/>
<dbReference type="eggNOG" id="COG0472">
    <property type="taxonomic scope" value="Bacteria"/>
</dbReference>
<dbReference type="HOGENOM" id="CLU_023982_0_0_4"/>
<dbReference type="OrthoDB" id="9805475at2"/>
<dbReference type="UniPathway" id="UPA00219"/>
<dbReference type="GO" id="GO:0005886">
    <property type="term" value="C:plasma membrane"/>
    <property type="evidence" value="ECO:0007669"/>
    <property type="project" value="UniProtKB-SubCell"/>
</dbReference>
<dbReference type="GO" id="GO:0046872">
    <property type="term" value="F:metal ion binding"/>
    <property type="evidence" value="ECO:0007669"/>
    <property type="project" value="UniProtKB-KW"/>
</dbReference>
<dbReference type="GO" id="GO:0008963">
    <property type="term" value="F:phospho-N-acetylmuramoyl-pentapeptide-transferase activity"/>
    <property type="evidence" value="ECO:0007669"/>
    <property type="project" value="UniProtKB-UniRule"/>
</dbReference>
<dbReference type="GO" id="GO:0051992">
    <property type="term" value="F:UDP-N-acetylmuramoyl-L-alanyl-D-glutamyl-meso-2,6-diaminopimelyl-D-alanyl-D-alanine:undecaprenyl-phosphate transferase activity"/>
    <property type="evidence" value="ECO:0007669"/>
    <property type="project" value="RHEA"/>
</dbReference>
<dbReference type="GO" id="GO:0051301">
    <property type="term" value="P:cell division"/>
    <property type="evidence" value="ECO:0007669"/>
    <property type="project" value="UniProtKB-KW"/>
</dbReference>
<dbReference type="GO" id="GO:0071555">
    <property type="term" value="P:cell wall organization"/>
    <property type="evidence" value="ECO:0007669"/>
    <property type="project" value="UniProtKB-KW"/>
</dbReference>
<dbReference type="GO" id="GO:0009252">
    <property type="term" value="P:peptidoglycan biosynthetic process"/>
    <property type="evidence" value="ECO:0007669"/>
    <property type="project" value="UniProtKB-UniRule"/>
</dbReference>
<dbReference type="GO" id="GO:0008360">
    <property type="term" value="P:regulation of cell shape"/>
    <property type="evidence" value="ECO:0007669"/>
    <property type="project" value="UniProtKB-KW"/>
</dbReference>
<dbReference type="CDD" id="cd06852">
    <property type="entry name" value="GT_MraY"/>
    <property type="match status" value="1"/>
</dbReference>
<dbReference type="HAMAP" id="MF_00038">
    <property type="entry name" value="MraY"/>
    <property type="match status" value="1"/>
</dbReference>
<dbReference type="InterPro" id="IPR000715">
    <property type="entry name" value="Glycosyl_transferase_4"/>
</dbReference>
<dbReference type="InterPro" id="IPR003524">
    <property type="entry name" value="PNAcMuramoyl-5peptid_Trfase"/>
</dbReference>
<dbReference type="InterPro" id="IPR018480">
    <property type="entry name" value="PNAcMuramoyl-5peptid_Trfase_CS"/>
</dbReference>
<dbReference type="NCBIfam" id="TIGR00445">
    <property type="entry name" value="mraY"/>
    <property type="match status" value="1"/>
</dbReference>
<dbReference type="PANTHER" id="PTHR22926">
    <property type="entry name" value="PHOSPHO-N-ACETYLMURAMOYL-PENTAPEPTIDE-TRANSFERASE"/>
    <property type="match status" value="1"/>
</dbReference>
<dbReference type="PANTHER" id="PTHR22926:SF5">
    <property type="entry name" value="PHOSPHO-N-ACETYLMURAMOYL-PENTAPEPTIDE-TRANSFERASE HOMOLOG"/>
    <property type="match status" value="1"/>
</dbReference>
<dbReference type="Pfam" id="PF00953">
    <property type="entry name" value="Glycos_transf_4"/>
    <property type="match status" value="1"/>
</dbReference>
<dbReference type="Pfam" id="PF10555">
    <property type="entry name" value="MraY_sig1"/>
    <property type="match status" value="1"/>
</dbReference>
<dbReference type="PROSITE" id="PS01347">
    <property type="entry name" value="MRAY_1"/>
    <property type="match status" value="1"/>
</dbReference>
<dbReference type="PROSITE" id="PS01348">
    <property type="entry name" value="MRAY_2"/>
    <property type="match status" value="1"/>
</dbReference>
<proteinExistence type="inferred from homology"/>
<gene>
    <name evidence="1" type="primary">mraY</name>
    <name type="ordered locus">Vapar_0916</name>
</gene>
<sequence>MLMSLAQWLQTLSPEFGFLRVFQYLTFRALMAALTALVVGLVAGPYVIRRLAALKIGQPVRGYGMETHLTKSGTPTMGGVLVLFAIAFATLMWFDPSNRFVWIVLWVTLGFGAIGWVDDWRKVVRKDPEGMRSREKYFWQSVVGLIAGFYLLFSISESSNWRVLQLFFAWVQSGFDLDFPPKINLLVPFFKEVSYPLGGIGFVILTYLVIVGASNAVNLTDGLDGLAIMPVVMVGSALGVFAYVTGSAVYSKYLLFPNIPGSGELLVFCSAMAGAGLAFLWFNTHPAQVFMGDVGALALGGALGTIAVIVRQEIVFFIMGGIFVVEAISVMAQVMYFKYTKKRYGEGRRVLKMAPLHHHFEKSGWRETQVVVRFWIITMLLCLIGLSTLKLR</sequence>
<name>MRAY_VARPS</name>
<protein>
    <recommendedName>
        <fullName evidence="1">Phospho-N-acetylmuramoyl-pentapeptide-transferase</fullName>
        <ecNumber evidence="1">2.7.8.13</ecNumber>
    </recommendedName>
    <alternativeName>
        <fullName evidence="1">UDP-MurNAc-pentapeptide phosphotransferase</fullName>
    </alternativeName>
</protein>
<organism>
    <name type="scientific">Variovorax paradoxus (strain S110)</name>
    <dbReference type="NCBI Taxonomy" id="543728"/>
    <lineage>
        <taxon>Bacteria</taxon>
        <taxon>Pseudomonadati</taxon>
        <taxon>Pseudomonadota</taxon>
        <taxon>Betaproteobacteria</taxon>
        <taxon>Burkholderiales</taxon>
        <taxon>Comamonadaceae</taxon>
        <taxon>Variovorax</taxon>
    </lineage>
</organism>
<feature type="chain" id="PRO_1000202081" description="Phospho-N-acetylmuramoyl-pentapeptide-transferase">
    <location>
        <begin position="1"/>
        <end position="392"/>
    </location>
</feature>
<feature type="transmembrane region" description="Helical" evidence="1">
    <location>
        <begin position="28"/>
        <end position="48"/>
    </location>
</feature>
<feature type="transmembrane region" description="Helical" evidence="1">
    <location>
        <begin position="74"/>
        <end position="94"/>
    </location>
</feature>
<feature type="transmembrane region" description="Helical" evidence="1">
    <location>
        <begin position="100"/>
        <end position="120"/>
    </location>
</feature>
<feature type="transmembrane region" description="Helical" evidence="1">
    <location>
        <begin position="137"/>
        <end position="157"/>
    </location>
</feature>
<feature type="transmembrane region" description="Helical" evidence="1">
    <location>
        <begin position="193"/>
        <end position="213"/>
    </location>
</feature>
<feature type="transmembrane region" description="Helical" evidence="1">
    <location>
        <begin position="225"/>
        <end position="245"/>
    </location>
</feature>
<feature type="transmembrane region" description="Helical" evidence="1">
    <location>
        <begin position="262"/>
        <end position="282"/>
    </location>
</feature>
<feature type="transmembrane region" description="Helical" evidence="1">
    <location>
        <begin position="289"/>
        <end position="309"/>
    </location>
</feature>
<feature type="transmembrane region" description="Helical" evidence="1">
    <location>
        <begin position="314"/>
        <end position="334"/>
    </location>
</feature>
<feature type="transmembrane region" description="Helical" evidence="1">
    <location>
        <begin position="369"/>
        <end position="389"/>
    </location>
</feature>
<evidence type="ECO:0000255" key="1">
    <source>
        <dbReference type="HAMAP-Rule" id="MF_00038"/>
    </source>
</evidence>
<comment type="function">
    <text evidence="1">Catalyzes the initial step of the lipid cycle reactions in the biosynthesis of the cell wall peptidoglycan: transfers peptidoglycan precursor phospho-MurNAc-pentapeptide from UDP-MurNAc-pentapeptide onto the lipid carrier undecaprenyl phosphate, yielding undecaprenyl-pyrophosphoryl-MurNAc-pentapeptide, known as lipid I.</text>
</comment>
<comment type="catalytic activity">
    <reaction evidence="1">
        <text>UDP-N-acetyl-alpha-D-muramoyl-L-alanyl-gamma-D-glutamyl-meso-2,6-diaminopimeloyl-D-alanyl-D-alanine + di-trans,octa-cis-undecaprenyl phosphate = di-trans,octa-cis-undecaprenyl diphospho-N-acetyl-alpha-D-muramoyl-L-alanyl-D-glutamyl-meso-2,6-diaminopimeloyl-D-alanyl-D-alanine + UMP</text>
        <dbReference type="Rhea" id="RHEA:28386"/>
        <dbReference type="ChEBI" id="CHEBI:57865"/>
        <dbReference type="ChEBI" id="CHEBI:60392"/>
        <dbReference type="ChEBI" id="CHEBI:61386"/>
        <dbReference type="ChEBI" id="CHEBI:61387"/>
        <dbReference type="EC" id="2.7.8.13"/>
    </reaction>
</comment>
<comment type="cofactor">
    <cofactor evidence="1">
        <name>Mg(2+)</name>
        <dbReference type="ChEBI" id="CHEBI:18420"/>
    </cofactor>
</comment>
<comment type="pathway">
    <text evidence="1">Cell wall biogenesis; peptidoglycan biosynthesis.</text>
</comment>
<comment type="subcellular location">
    <subcellularLocation>
        <location evidence="1">Cell inner membrane</location>
        <topology evidence="1">Multi-pass membrane protein</topology>
    </subcellularLocation>
</comment>
<comment type="similarity">
    <text evidence="1">Belongs to the glycosyltransferase 4 family. MraY subfamily.</text>
</comment>
<reference key="1">
    <citation type="journal article" date="2011" name="J. Bacteriol.">
        <title>Complete genome sequence of the metabolically versatile plant growth-promoting endophyte, Variovorax paradoxus S110.</title>
        <authorList>
            <person name="Han J.I."/>
            <person name="Choi H.K."/>
            <person name="Lee S.W."/>
            <person name="Orwin P.M."/>
            <person name="Kim J."/>
            <person name="Laroe S.L."/>
            <person name="Kim T.G."/>
            <person name="O'Neil J."/>
            <person name="Leadbetter J.R."/>
            <person name="Lee S.Y."/>
            <person name="Hur C.G."/>
            <person name="Spain J.C."/>
            <person name="Ovchinnikova G."/>
            <person name="Goodwin L."/>
            <person name="Han C."/>
        </authorList>
    </citation>
    <scope>NUCLEOTIDE SEQUENCE [LARGE SCALE GENOMIC DNA]</scope>
    <source>
        <strain>S110</strain>
    </source>
</reference>
<keyword id="KW-0131">Cell cycle</keyword>
<keyword id="KW-0132">Cell division</keyword>
<keyword id="KW-0997">Cell inner membrane</keyword>
<keyword id="KW-1003">Cell membrane</keyword>
<keyword id="KW-0133">Cell shape</keyword>
<keyword id="KW-0961">Cell wall biogenesis/degradation</keyword>
<keyword id="KW-0460">Magnesium</keyword>
<keyword id="KW-0472">Membrane</keyword>
<keyword id="KW-0479">Metal-binding</keyword>
<keyword id="KW-0573">Peptidoglycan synthesis</keyword>
<keyword id="KW-0808">Transferase</keyword>
<keyword id="KW-0812">Transmembrane</keyword>
<keyword id="KW-1133">Transmembrane helix</keyword>
<accession>C5CNF1</accession>